<proteinExistence type="inferred from homology"/>
<organismHost>
    <name type="scientific">Homo sapiens</name>
    <name type="common">Human</name>
    <dbReference type="NCBI Taxonomy" id="9606"/>
</organismHost>
<sequence length="378" mass="41608">MSCTPCRPQKRLTRPRSQVPRVQTLATEVKKGGVEVLAAVPLSEETEFKVELFVKPVIGNTTAAQDGREPTPHYWSISSAIHDKESGSSIKVEETPDADTTVCYSLAEIAPPDIPNQVSECDMKVWELYRMETELLVVPLVNALGNTNGVVHGLAGTQLYFWAVGGQPLDVVGVTPTDKYKGPTTYTINPPGDPRTLHVYNSNTPKAKVTSERYSVESWAPDPSRNDNCRYFGRVVGGAATPPVVSYGNNSTIPLLDENGIGILCLQGRLYITCADMLGTANSRIHTPMARFFRLHFRQRRVKNPFTMNVLYKQVFNRPTETVDAQVGVTEVTMVEEIGPLPPSIQTTLPTSVNLTQLPRTVTLQSQTPLLNTQQNSK</sequence>
<protein>
    <recommendedName>
        <fullName>Major capsid protein VP1</fullName>
    </recommendedName>
    <alternativeName>
        <fullName>Major structural protein VP1</fullName>
    </alternativeName>
</protein>
<reference key="1">
    <citation type="journal article" date="2007" name="J. Virol.">
        <title>Identification of a third human polyomavirus.</title>
        <authorList>
            <person name="Allander T."/>
            <person name="Andreasson K."/>
            <person name="Gupta S."/>
            <person name="Bjerkner A."/>
            <person name="Bogdanovic G."/>
            <person name="Persson M.A."/>
            <person name="Dalianis T."/>
            <person name="Ramqvist T."/>
            <person name="Andersson B."/>
        </authorList>
    </citation>
    <scope>NUCLEOTIDE SEQUENCE [GENOMIC DNA]</scope>
</reference>
<reference key="2">
    <citation type="journal article" date="2009" name="Virology">
        <title>The Polyomaviridae: Contributions of virus structure to our understanding of virus receptors and infectious entry.</title>
        <authorList>
            <person name="Neu U."/>
            <person name="Stehle T."/>
            <person name="Atwood W.J."/>
        </authorList>
    </citation>
    <scope>REVIEW</scope>
</reference>
<feature type="chain" id="PRO_0000295815" description="Major capsid protein VP1">
    <location>
        <begin position="1"/>
        <end position="378"/>
    </location>
</feature>
<feature type="region of interest" description="Disordered" evidence="2">
    <location>
        <begin position="1"/>
        <end position="21"/>
    </location>
</feature>
<evidence type="ECO:0000250" key="1">
    <source>
        <dbReference type="UniProtKB" id="P03087"/>
    </source>
</evidence>
<evidence type="ECO:0000256" key="2">
    <source>
        <dbReference type="SAM" id="MobiDB-lite"/>
    </source>
</evidence>
<evidence type="ECO:0000305" key="3"/>
<evidence type="ECO:0000305" key="4">
    <source>
    </source>
</evidence>
<name>VP1_POVKI</name>
<organism>
    <name type="scientific">KI polyomavirus (isolate Stockholm 350)</name>
    <name type="common">KIPyV</name>
    <dbReference type="NCBI Taxonomy" id="423447"/>
    <lineage>
        <taxon>Viruses</taxon>
        <taxon>Monodnaviria</taxon>
        <taxon>Shotokuvirae</taxon>
        <taxon>Cossaviricota</taxon>
        <taxon>Papovaviricetes</taxon>
        <taxon>Sepolyvirales</taxon>
        <taxon>Polyomaviridae</taxon>
        <taxon>Betapolyomavirus</taxon>
        <taxon>Betapolyomavirus tertihominis</taxon>
    </lineage>
</organism>
<dbReference type="EMBL" id="EF127907">
    <property type="protein sequence ID" value="ABN09922.1"/>
    <property type="molecule type" value="Genomic_DNA"/>
</dbReference>
<dbReference type="SMR" id="P0DOI2"/>
<dbReference type="EvolutionaryTrace" id="P0DOI2"/>
<dbReference type="Proteomes" id="UP000101503">
    <property type="component" value="Genome"/>
</dbReference>
<dbReference type="GO" id="GO:0042025">
    <property type="term" value="C:host cell nucleus"/>
    <property type="evidence" value="ECO:0007669"/>
    <property type="project" value="UniProtKB-SubCell"/>
</dbReference>
<dbReference type="GO" id="GO:0039620">
    <property type="term" value="C:T=7 icosahedral viral capsid"/>
    <property type="evidence" value="ECO:0007669"/>
    <property type="project" value="UniProtKB-KW"/>
</dbReference>
<dbReference type="GO" id="GO:0005198">
    <property type="term" value="F:structural molecule activity"/>
    <property type="evidence" value="ECO:0007669"/>
    <property type="project" value="InterPro"/>
</dbReference>
<dbReference type="GO" id="GO:0075509">
    <property type="term" value="P:endocytosis involved in viral entry into host cell"/>
    <property type="evidence" value="ECO:0007669"/>
    <property type="project" value="UniProtKB-KW"/>
</dbReference>
<dbReference type="GO" id="GO:0019062">
    <property type="term" value="P:virion attachment to host cell"/>
    <property type="evidence" value="ECO:0007669"/>
    <property type="project" value="UniProtKB-KW"/>
</dbReference>
<dbReference type="Gene3D" id="2.60.175.10">
    <property type="entry name" value="Capsid protein VP1,Polyomavirus"/>
    <property type="match status" value="1"/>
</dbReference>
<dbReference type="InterPro" id="IPR000662">
    <property type="entry name" value="Capsid_VP1_Polyomavir"/>
</dbReference>
<dbReference type="InterPro" id="IPR011222">
    <property type="entry name" value="dsDNA_vir_gr_I_capsid"/>
</dbReference>
<dbReference type="InterPro" id="IPR036931">
    <property type="entry name" value="Polyomavir_VP1_sf"/>
</dbReference>
<dbReference type="Pfam" id="PF00718">
    <property type="entry name" value="Polyoma_coat"/>
    <property type="match status" value="1"/>
</dbReference>
<dbReference type="SUPFAM" id="SSF88648">
    <property type="entry name" value="Group I dsDNA viruses"/>
    <property type="match status" value="1"/>
</dbReference>
<comment type="function">
    <text evidence="1 4">Forms an icosahedral capsid with a T=7 symmetry and a 40 nm diameter. The capsid is composed of 72 pentamers linked to each other by disulfide bonds and associated with VP2 or VP3 proteins. Interacts with sialic acids on the cell surface to provide virion attachment to target cell. Once attached, the virion is internalized by endocytosis and traffics to the endoplasmic reticulum. Inside the endoplasmic reticulum, the protein folding machinery isomerizes VP1 interpentamer disulfide bonds, thereby triggering initial uncoating. Next, the virion uses the endoplasmic reticulum-associated degradation machinery to probably translocate in the cytosol before reaching the nucleus. Nuclear entry of the viral DNA involves the selective exposure and importin recognition of VP2/Vp3 nuclear localization signal. In late phase of infection, neo-synthesized VP1 encapsulates replicated genomic DNA in the nucleus, and participates in rearranging nucleosomes around the viral DNA. The viral progenies exit the cells by lytic release.</text>
</comment>
<comment type="subunit">
    <text evidence="1">Homomultimer. The virus capsid is composed of 72 icosahedral units, each one composed of five disulfide-linked copies of VP1. Interacts with minor capsid proteins VP2 and VP3.</text>
</comment>
<comment type="subcellular location">
    <subcellularLocation>
        <location evidence="1">Virion</location>
    </subcellularLocation>
    <subcellularLocation>
        <location evidence="1">Host nucleus</location>
    </subcellularLocation>
</comment>
<comment type="alternative products">
    <event type="alternative splicing"/>
    <event type="alternative initiation"/>
    <isoform>
        <id>P0DOI2-1</id>
        <id>A3R4N3-1</id>
        <name>VP1</name>
        <sequence type="displayed"/>
    </isoform>
    <isoform>
        <id>P0DOJ1-1</id>
        <id>A3R4N1-1</id>
        <name>VP2</name>
        <name>Minor capsid protein VP2</name>
        <sequence type="external"/>
    </isoform>
    <isoform>
        <id>P0DOJ1-2</id>
        <id>A3R4N1-2</id>
        <name>VP3</name>
        <name>Minor capsid protein VP3</name>
        <sequence type="external"/>
    </isoform>
</comment>
<comment type="miscellaneous">
    <molecule>Isoform VP1</molecule>
    <text>Produced by alternative splicing of the late mRNA.</text>
</comment>
<comment type="similarity">
    <text evidence="3">Belongs to the polyomaviruses coat protein VP1 family.</text>
</comment>
<keyword id="KW-0024">Alternative initiation</keyword>
<keyword id="KW-0025">Alternative splicing</keyword>
<keyword id="KW-0167">Capsid protein</keyword>
<keyword id="KW-1015">Disulfide bond</keyword>
<keyword id="KW-1048">Host nucleus</keyword>
<keyword id="KW-0945">Host-virus interaction</keyword>
<keyword id="KW-0426">Late protein</keyword>
<keyword id="KW-1145">T=7 icosahedral capsid protein</keyword>
<keyword id="KW-1161">Viral attachment to host cell</keyword>
<keyword id="KW-1162">Viral penetration into host cytoplasm</keyword>
<keyword id="KW-0946">Virion</keyword>
<keyword id="KW-1164">Virus endocytosis by host</keyword>
<keyword id="KW-1160">Virus entry into host cell</keyword>
<accession>P0DOI2</accession>
<accession>A3R4M8</accession>
<accession>A3R4N3</accession>
<accession>A3R4N8</accession>